<comment type="function">
    <text>Lectin that binds galactose.</text>
</comment>
<comment type="subunit">
    <text>Homotetramer.</text>
</comment>
<comment type="tissue specificity">
    <text>Seed.</text>
</comment>
<comment type="PTM">
    <text>Partially N-glycosylated at Asn-111 and Asn-183 with the heptasaccharide [(beta-xylosyl-1,2)(alpha-mannosyl-1,6)(alpha-mannosyl-1,3)]beta-manosyl-1,4-GlcNAC-beta-1,4-GlcNAc-beta-1,4 [alpha-fucosyl-1,3]GlcNAc. A small proportion of alpha chains are proteolytically cleaved at 114-115 into gamma and beta chains. This is probably dependent on the deglycosylation of Asn-111.</text>
</comment>
<comment type="miscellaneous">
    <text evidence="1">Binds one manganese (or another transition metal) ion and one calcium ion. The metal ions are essential for the saccharide-binding and cell-agglutinating activities (By similarity).</text>
</comment>
<comment type="similarity">
    <text evidence="2">Belongs to the leguminous lectin family.</text>
</comment>
<name>LECS_VATMA</name>
<proteinExistence type="evidence at protein level"/>
<organism>
    <name type="scientific">Vatairea macrocarpa</name>
    <dbReference type="NCBI Taxonomy" id="77050"/>
    <lineage>
        <taxon>Eukaryota</taxon>
        <taxon>Viridiplantae</taxon>
        <taxon>Streptophyta</taxon>
        <taxon>Embryophyta</taxon>
        <taxon>Tracheophyta</taxon>
        <taxon>Spermatophyta</taxon>
        <taxon>Magnoliopsida</taxon>
        <taxon>eudicotyledons</taxon>
        <taxon>Gunneridae</taxon>
        <taxon>Pentapetalae</taxon>
        <taxon>rosids</taxon>
        <taxon>fabids</taxon>
        <taxon>Fabales</taxon>
        <taxon>Fabaceae</taxon>
        <taxon>Papilionoideae</taxon>
        <taxon>50 kb inversion clade</taxon>
        <taxon>vataireoid clade</taxon>
        <taxon>Vatairea</taxon>
    </lineage>
</organism>
<reference key="1">
    <citation type="journal article" date="1998" name="FEBS Lett.">
        <title>Amino acid sequence, glycan structure, and proteolytic processing of the lectin of Vatairea macrocarpa seeds.</title>
        <authorList>
            <person name="Calvete J.J."/>
            <person name="Santos C.F."/>
            <person name="Mann K."/>
            <person name="Grangeiro T.B."/>
            <person name="Nimtz M."/>
            <person name="Urbanke C."/>
            <person name="Sousa-Cavada B."/>
        </authorList>
    </citation>
    <scope>PROTEIN SEQUENCE</scope>
    <source>
        <tissue>Seed</tissue>
    </source>
</reference>
<accession>P81371</accession>
<protein>
    <recommendedName>
        <fullName>Seed lectin</fullName>
    </recommendedName>
    <alternativeName>
        <fullName>VML</fullName>
    </alternativeName>
    <component>
        <recommendedName>
            <fullName>Seed lectin alpha chain</fullName>
        </recommendedName>
    </component>
    <component>
        <recommendedName>
            <fullName>Seed lectin gamma chain</fullName>
        </recommendedName>
    </component>
    <component>
        <recommendedName>
            <fullName>Seed lectin beta chain</fullName>
        </recommendedName>
    </component>
</protein>
<keyword id="KW-0002">3D-structure</keyword>
<keyword id="KW-0106">Calcium</keyword>
<keyword id="KW-0903">Direct protein sequencing</keyword>
<keyword id="KW-0325">Glycoprotein</keyword>
<keyword id="KW-0430">Lectin</keyword>
<keyword id="KW-0464">Manganese</keyword>
<keyword id="KW-0479">Metal-binding</keyword>
<dbReference type="PDB" id="4U2A">
    <property type="method" value="X-ray"/>
    <property type="resolution" value="1.74 A"/>
    <property type="chains" value="A=1-240"/>
</dbReference>
<dbReference type="PDB" id="4U36">
    <property type="method" value="X-ray"/>
    <property type="resolution" value="1.40 A"/>
    <property type="chains" value="A=1-240"/>
</dbReference>
<dbReference type="PDB" id="4WV8">
    <property type="method" value="X-ray"/>
    <property type="resolution" value="1.83 A"/>
    <property type="chains" value="A/B/C/D=1-240"/>
</dbReference>
<dbReference type="PDB" id="4XTM">
    <property type="method" value="X-ray"/>
    <property type="resolution" value="2.70 A"/>
    <property type="chains" value="A=1-240"/>
</dbReference>
<dbReference type="PDB" id="4XTP">
    <property type="method" value="X-ray"/>
    <property type="resolution" value="1.97 A"/>
    <property type="chains" value="A=1-240"/>
</dbReference>
<dbReference type="PDB" id="4XXA">
    <property type="method" value="X-ray"/>
    <property type="resolution" value="1.90 A"/>
    <property type="chains" value="A/B=1-240"/>
</dbReference>
<dbReference type="PDBsum" id="4U2A"/>
<dbReference type="PDBsum" id="4U36"/>
<dbReference type="PDBsum" id="4WV8"/>
<dbReference type="PDBsum" id="4XTM"/>
<dbReference type="PDBsum" id="4XTP"/>
<dbReference type="PDBsum" id="4XXA"/>
<dbReference type="SASBDB" id="P81371"/>
<dbReference type="SMR" id="P81371"/>
<dbReference type="UniLectin" id="P81371"/>
<dbReference type="GlyConnect" id="551">
    <property type="glycosylation" value="2 N-Linked glycans"/>
</dbReference>
<dbReference type="EvolutionaryTrace" id="P81371"/>
<dbReference type="GO" id="GO:0030246">
    <property type="term" value="F:carbohydrate binding"/>
    <property type="evidence" value="ECO:0007669"/>
    <property type="project" value="UniProtKB-KW"/>
</dbReference>
<dbReference type="GO" id="GO:0046872">
    <property type="term" value="F:metal ion binding"/>
    <property type="evidence" value="ECO:0007669"/>
    <property type="project" value="UniProtKB-KW"/>
</dbReference>
<dbReference type="CDD" id="cd06899">
    <property type="entry name" value="lectin_legume_LecRK_Arcelin_ConA"/>
    <property type="match status" value="1"/>
</dbReference>
<dbReference type="Gene3D" id="2.60.120.200">
    <property type="match status" value="1"/>
</dbReference>
<dbReference type="InterPro" id="IPR013320">
    <property type="entry name" value="ConA-like_dom_sf"/>
</dbReference>
<dbReference type="InterPro" id="IPR016363">
    <property type="entry name" value="L-lectin"/>
</dbReference>
<dbReference type="InterPro" id="IPR000985">
    <property type="entry name" value="Lectin_LegA_CS"/>
</dbReference>
<dbReference type="InterPro" id="IPR019825">
    <property type="entry name" value="Lectin_legB_Mn/Ca_BS"/>
</dbReference>
<dbReference type="InterPro" id="IPR001220">
    <property type="entry name" value="Legume_lectin_dom"/>
</dbReference>
<dbReference type="InterPro" id="IPR050258">
    <property type="entry name" value="Leguminous_Lectin"/>
</dbReference>
<dbReference type="PANTHER" id="PTHR32401">
    <property type="entry name" value="CONCANAVALIN A-LIKE LECTIN FAMILY PROTEIN"/>
    <property type="match status" value="1"/>
</dbReference>
<dbReference type="PANTHER" id="PTHR32401:SF45">
    <property type="entry name" value="LECTIN"/>
    <property type="match status" value="1"/>
</dbReference>
<dbReference type="Pfam" id="PF00139">
    <property type="entry name" value="Lectin_legB"/>
    <property type="match status" value="1"/>
</dbReference>
<dbReference type="PIRSF" id="PIRSF002690">
    <property type="entry name" value="L-type_lectin_plant"/>
    <property type="match status" value="1"/>
</dbReference>
<dbReference type="SUPFAM" id="SSF49899">
    <property type="entry name" value="Concanavalin A-like lectins/glucanases"/>
    <property type="match status" value="1"/>
</dbReference>
<dbReference type="PROSITE" id="PS00308">
    <property type="entry name" value="LECTIN_LEGUME_ALPHA"/>
    <property type="match status" value="1"/>
</dbReference>
<dbReference type="PROSITE" id="PS00307">
    <property type="entry name" value="LECTIN_LEGUME_BETA"/>
    <property type="match status" value="1"/>
</dbReference>
<sequence length="240" mass="26197">SEVVSFSFTKFNPNPKDIILQGDALVTSKGKLQLTKVKDGKPVDHSLGRALYAAPIHIWDDSTDRVASFATSFSFVVEAPDESKTADGIAFFLAPPDTQPQKDGGFLGLFNDSNKSIQTVAVEFDTFSNTWDPSARHIGINVNSIESMKYVKWGWENGKVANVYISYEASTKTLTASLTYPSNATSYIVSANVDLKSALPEWVRVGFSATSGLSRDHVETHDVLDWSFTSTLQAPSDDSN</sequence>
<evidence type="ECO:0000250" key="1"/>
<evidence type="ECO:0000305" key="2"/>
<evidence type="ECO:0007829" key="3">
    <source>
        <dbReference type="PDB" id="4U36"/>
    </source>
</evidence>
<evidence type="ECO:0007829" key="4">
    <source>
        <dbReference type="PDB" id="4WV8"/>
    </source>
</evidence>
<feature type="chain" id="PRO_0000017656" description="Seed lectin alpha chain">
    <location>
        <begin position="1"/>
        <end position="240"/>
    </location>
</feature>
<feature type="chain" id="PRO_0000017657" description="Seed lectin gamma chain">
    <location>
        <begin position="1"/>
        <end position="114"/>
    </location>
</feature>
<feature type="chain" id="PRO_0000017658" description="Seed lectin beta chain">
    <location>
        <begin position="115"/>
        <end position="239"/>
    </location>
</feature>
<feature type="binding site" evidence="1">
    <location>
        <position position="123"/>
    </location>
    <ligand>
        <name>Mn(2+)</name>
        <dbReference type="ChEBI" id="CHEBI:29035"/>
    </ligand>
</feature>
<feature type="binding site" evidence="1">
    <location>
        <position position="125"/>
    </location>
    <ligand>
        <name>Ca(2+)</name>
        <dbReference type="ChEBI" id="CHEBI:29108"/>
    </ligand>
</feature>
<feature type="binding site" evidence="1">
    <location>
        <position position="125"/>
    </location>
    <ligand>
        <name>Mn(2+)</name>
        <dbReference type="ChEBI" id="CHEBI:29035"/>
    </ligand>
</feature>
<feature type="binding site" evidence="1">
    <location>
        <position position="129"/>
    </location>
    <ligand>
        <name>Ca(2+)</name>
        <dbReference type="ChEBI" id="CHEBI:29108"/>
    </ligand>
</feature>
<feature type="binding site" evidence="1">
    <location>
        <position position="132"/>
    </location>
    <ligand>
        <name>Ca(2+)</name>
        <dbReference type="ChEBI" id="CHEBI:29108"/>
    </ligand>
</feature>
<feature type="binding site" evidence="1">
    <location>
        <position position="132"/>
    </location>
    <ligand>
        <name>Mn(2+)</name>
        <dbReference type="ChEBI" id="CHEBI:29035"/>
    </ligand>
</feature>
<feature type="binding site" evidence="1">
    <location>
        <position position="137"/>
    </location>
    <ligand>
        <name>Mn(2+)</name>
        <dbReference type="ChEBI" id="CHEBI:29035"/>
    </ligand>
</feature>
<feature type="glycosylation site" description="N-linked (GlcNAc...) asparagine">
    <location>
        <position position="111"/>
    </location>
</feature>
<feature type="glycosylation site" description="N-linked (GlcNAc...) asparagine">
    <location>
        <position position="183"/>
    </location>
</feature>
<feature type="sequence variant">
    <original>I</original>
    <variation>V</variation>
    <location>
        <position position="117"/>
    </location>
</feature>
<feature type="sequence variant">
    <original>M</original>
    <variation>K</variation>
    <location>
        <position position="148"/>
    </location>
</feature>
<feature type="sequence variant">
    <original>G</original>
    <variation>A</variation>
    <location>
        <position position="154"/>
    </location>
</feature>
<feature type="sequence variant">
    <original>E</original>
    <variation>Q</variation>
    <location>
        <position position="168"/>
    </location>
</feature>
<feature type="unsure residue">
    <location>
        <begin position="239"/>
        <end position="240"/>
    </location>
</feature>
<feature type="strand" evidence="3">
    <location>
        <begin position="2"/>
        <end position="10"/>
    </location>
</feature>
<feature type="strand" evidence="3">
    <location>
        <begin position="16"/>
        <end position="22"/>
    </location>
</feature>
<feature type="strand" evidence="3">
    <location>
        <begin position="47"/>
        <end position="54"/>
    </location>
</feature>
<feature type="turn" evidence="3">
    <location>
        <begin position="61"/>
        <end position="64"/>
    </location>
</feature>
<feature type="strand" evidence="3">
    <location>
        <begin position="68"/>
        <end position="76"/>
    </location>
</feature>
<feature type="strand" evidence="3">
    <location>
        <begin position="87"/>
        <end position="94"/>
    </location>
</feature>
<feature type="helix" evidence="3">
    <location>
        <begin position="104"/>
        <end position="106"/>
    </location>
</feature>
<feature type="turn" evidence="3">
    <location>
        <begin position="107"/>
        <end position="109"/>
    </location>
</feature>
<feature type="strand" evidence="4">
    <location>
        <begin position="112"/>
        <end position="115"/>
    </location>
</feature>
<feature type="strand" evidence="3">
    <location>
        <begin position="120"/>
        <end position="125"/>
    </location>
</feature>
<feature type="strand" evidence="3">
    <location>
        <begin position="137"/>
        <end position="146"/>
    </location>
</feature>
<feature type="strand" evidence="3">
    <location>
        <begin position="148"/>
        <end position="152"/>
    </location>
</feature>
<feature type="strand" evidence="3">
    <location>
        <begin position="161"/>
        <end position="168"/>
    </location>
</feature>
<feature type="helix" evidence="3">
    <location>
        <begin position="169"/>
        <end position="171"/>
    </location>
</feature>
<feature type="strand" evidence="3">
    <location>
        <begin position="173"/>
        <end position="180"/>
    </location>
</feature>
<feature type="turn" evidence="3">
    <location>
        <begin position="181"/>
        <end position="184"/>
    </location>
</feature>
<feature type="strand" evidence="3">
    <location>
        <begin position="185"/>
        <end position="192"/>
    </location>
</feature>
<feature type="helix" evidence="3">
    <location>
        <begin position="195"/>
        <end position="198"/>
    </location>
</feature>
<feature type="strand" evidence="3">
    <location>
        <begin position="201"/>
        <end position="211"/>
    </location>
</feature>
<feature type="strand" evidence="3">
    <location>
        <begin position="222"/>
        <end position="232"/>
    </location>
</feature>